<sequence>QQVAAGAVSFRKCTPCHNIGEGATNKVGPVLDGLEGRHSGSIPGFNYSEANKKSGLTWDKATFKSYIADPRAKIPGTKMVFAGIKNEKEQEDLWAFLTQYGPDGKKK</sequence>
<organism>
    <name type="scientific">Rhodoplanes tepidamans</name>
    <name type="common">Rhodoplanes cryptolactis</name>
    <dbReference type="NCBI Taxonomy" id="200616"/>
    <lineage>
        <taxon>Bacteria</taxon>
        <taxon>Pseudomonadati</taxon>
        <taxon>Pseudomonadota</taxon>
        <taxon>Alphaproteobacteria</taxon>
        <taxon>Hyphomicrobiales</taxon>
        <taxon>Hyphomicrobiaceae</taxon>
        <taxon>Rhodoplanes</taxon>
    </lineage>
</organism>
<evidence type="ECO:0000250" key="1">
    <source>
        <dbReference type="UniProtKB" id="P00083"/>
    </source>
</evidence>
<evidence type="ECO:0000250" key="2">
    <source>
        <dbReference type="UniProtKB" id="P0C0X8"/>
    </source>
</evidence>
<evidence type="ECO:0000255" key="3"/>
<evidence type="ECO:0000255" key="4">
    <source>
        <dbReference type="PROSITE-ProRule" id="PRU00433"/>
    </source>
</evidence>
<evidence type="ECO:0000269" key="5">
    <source>
    </source>
</evidence>
<evidence type="ECO:0000305" key="6"/>
<keyword id="KW-0903">Direct protein sequencing</keyword>
<keyword id="KW-0249">Electron transport</keyword>
<keyword id="KW-0349">Heme</keyword>
<keyword id="KW-0408">Iron</keyword>
<keyword id="KW-0479">Metal-binding</keyword>
<keyword id="KW-0574">Periplasm</keyword>
<keyword id="KW-0602">Photosynthesis</keyword>
<keyword id="KW-0873">Pyrrolidone carboxylic acid</keyword>
<keyword id="KW-0813">Transport</keyword>
<dbReference type="SMR" id="P86323"/>
<dbReference type="GO" id="GO:0042597">
    <property type="term" value="C:periplasmic space"/>
    <property type="evidence" value="ECO:0000314"/>
    <property type="project" value="UniProtKB"/>
</dbReference>
<dbReference type="GO" id="GO:0009055">
    <property type="term" value="F:electron transfer activity"/>
    <property type="evidence" value="ECO:0007669"/>
    <property type="project" value="InterPro"/>
</dbReference>
<dbReference type="GO" id="GO:0020037">
    <property type="term" value="F:heme binding"/>
    <property type="evidence" value="ECO:0007669"/>
    <property type="project" value="InterPro"/>
</dbReference>
<dbReference type="GO" id="GO:0046872">
    <property type="term" value="F:metal ion binding"/>
    <property type="evidence" value="ECO:0007669"/>
    <property type="project" value="UniProtKB-KW"/>
</dbReference>
<dbReference type="GO" id="GO:0015979">
    <property type="term" value="P:photosynthesis"/>
    <property type="evidence" value="ECO:0007669"/>
    <property type="project" value="UniProtKB-KW"/>
</dbReference>
<dbReference type="Gene3D" id="1.10.760.10">
    <property type="entry name" value="Cytochrome c-like domain"/>
    <property type="match status" value="1"/>
</dbReference>
<dbReference type="InterPro" id="IPR009056">
    <property type="entry name" value="Cyt_c-like_dom"/>
</dbReference>
<dbReference type="InterPro" id="IPR036909">
    <property type="entry name" value="Cyt_c-like_dom_sf"/>
</dbReference>
<dbReference type="InterPro" id="IPR002327">
    <property type="entry name" value="Cyt_c_1A/1B"/>
</dbReference>
<dbReference type="PANTHER" id="PTHR11961">
    <property type="entry name" value="CYTOCHROME C"/>
    <property type="match status" value="1"/>
</dbReference>
<dbReference type="Pfam" id="PF00034">
    <property type="entry name" value="Cytochrom_C"/>
    <property type="match status" value="1"/>
</dbReference>
<dbReference type="PRINTS" id="PR00604">
    <property type="entry name" value="CYTCHRMECIAB"/>
</dbReference>
<dbReference type="SUPFAM" id="SSF46626">
    <property type="entry name" value="Cytochrome c"/>
    <property type="match status" value="1"/>
</dbReference>
<dbReference type="PROSITE" id="PS51007">
    <property type="entry name" value="CYTC"/>
    <property type="match status" value="1"/>
</dbReference>
<accession>P86323</accession>
<protein>
    <recommendedName>
        <fullName evidence="1">Cytochrome c2</fullName>
    </recommendedName>
</protein>
<name>CYC22_RHOTP</name>
<reference key="1">
    <citation type="journal article" date="2010" name="Arch. Microbiol.">
        <title>Evidence from the structure and function of cytochromes c(2) that nonsulfur purple bacterial photosynthesis followed the evolution of oxygen respiration.</title>
        <authorList>
            <person name="Meyer T."/>
            <person name="Van Driessche G."/>
            <person name="Ambler R."/>
            <person name="Kyndt J."/>
            <person name="Devreese B."/>
            <person name="Van Beeumen J."/>
            <person name="Cusanovich M."/>
        </authorList>
    </citation>
    <scope>PROTEIN SEQUENCE</scope>
    <scope>SUBCELLULAR LOCATION</scope>
</reference>
<feature type="chain" id="PRO_0000380712" description="Cytochrome c2">
    <location>
        <begin position="1"/>
        <end position="107"/>
    </location>
</feature>
<feature type="binding site" description="covalent" evidence="1 4">
    <location>
        <position position="13"/>
    </location>
    <ligand>
        <name>heme c</name>
        <dbReference type="ChEBI" id="CHEBI:61717"/>
    </ligand>
</feature>
<feature type="binding site" description="covalent" evidence="1 4">
    <location>
        <position position="16"/>
    </location>
    <ligand>
        <name>heme c</name>
        <dbReference type="ChEBI" id="CHEBI:61717"/>
    </ligand>
</feature>
<feature type="binding site" description="axial binding residue" evidence="1 4">
    <location>
        <position position="17"/>
    </location>
    <ligand>
        <name>heme c</name>
        <dbReference type="ChEBI" id="CHEBI:61717"/>
    </ligand>
    <ligandPart>
        <name>Fe</name>
        <dbReference type="ChEBI" id="CHEBI:18248"/>
    </ligandPart>
</feature>
<feature type="binding site" description="axial binding residue" evidence="1 4">
    <location>
        <position position="79"/>
    </location>
    <ligand>
        <name>heme c</name>
        <dbReference type="ChEBI" id="CHEBI:61717"/>
    </ligand>
    <ligandPart>
        <name>Fe</name>
        <dbReference type="ChEBI" id="CHEBI:18248"/>
    </ligandPart>
</feature>
<feature type="modified residue" description="Pyrrolidone carboxylic acid" evidence="2">
    <location>
        <position position="1"/>
    </location>
</feature>
<feature type="unsure residue" description="Q or E">
    <location>
        <position position="1"/>
    </location>
</feature>
<comment type="function">
    <text evidence="6">Cytochrome c2 is found mainly in purple, non-sulfur, photosynthetic bacteria where it functions as the electron donor to the oxidized bacteriochlorophyll in the photophosphorylation pathway. However, it may also have a role in the respiratory chain and is found in some non-photosynthetic bacteria.</text>
</comment>
<comment type="subcellular location">
    <subcellularLocation>
        <location evidence="5">Periplasm</location>
    </subcellularLocation>
</comment>
<comment type="PTM">
    <text evidence="1">Binds 1 heme c group covalently per subunit.</text>
</comment>
<comment type="similarity">
    <text evidence="3">Belongs to the cytochrome c family.</text>
</comment>
<proteinExistence type="evidence at protein level"/>